<protein>
    <recommendedName>
        <fullName>NADH-ubiquinone oxidoreductase chain 4</fullName>
        <ecNumber evidence="1">7.1.1.2</ecNumber>
    </recommendedName>
    <alternativeName>
        <fullName>NADH dehydrogenase subunit 4</fullName>
    </alternativeName>
</protein>
<dbReference type="EC" id="7.1.1.2" evidence="1"/>
<dbReference type="EMBL" id="AF010406">
    <property type="protein sequence ID" value="AAD10104.1"/>
    <property type="molecule type" value="Genomic_DNA"/>
</dbReference>
<dbReference type="PIR" id="T11059">
    <property type="entry name" value="T11059"/>
</dbReference>
<dbReference type="RefSeq" id="NP_008415.1">
    <property type="nucleotide sequence ID" value="NC_001941.1"/>
</dbReference>
<dbReference type="PDB" id="5LNK">
    <property type="method" value="EM"/>
    <property type="resolution" value="3.90 A"/>
    <property type="chains" value="M=1-459"/>
</dbReference>
<dbReference type="PDB" id="6Q9B">
    <property type="method" value="EM"/>
    <property type="resolution" value="3.90 A"/>
    <property type="chains" value="D4=1-459"/>
</dbReference>
<dbReference type="PDB" id="6QA9">
    <property type="method" value="EM"/>
    <property type="resolution" value="4.10 A"/>
    <property type="chains" value="D4=1-459"/>
</dbReference>
<dbReference type="PDB" id="6QBX">
    <property type="method" value="EM"/>
    <property type="resolution" value="4.20 A"/>
    <property type="chains" value="D4=1-459"/>
</dbReference>
<dbReference type="PDB" id="6QC2">
    <property type="method" value="EM"/>
    <property type="resolution" value="4.20 A"/>
    <property type="chains" value="D4=1-459"/>
</dbReference>
<dbReference type="PDB" id="6QC3">
    <property type="method" value="EM"/>
    <property type="resolution" value="4.20 A"/>
    <property type="chains" value="D4=1-459"/>
</dbReference>
<dbReference type="PDB" id="6QC4">
    <property type="method" value="EM"/>
    <property type="resolution" value="4.60 A"/>
    <property type="chains" value="D4=1-459"/>
</dbReference>
<dbReference type="PDB" id="6QC5">
    <property type="method" value="EM"/>
    <property type="resolution" value="4.30 A"/>
    <property type="chains" value="D4=1-459"/>
</dbReference>
<dbReference type="PDB" id="6QC6">
    <property type="method" value="EM"/>
    <property type="resolution" value="4.10 A"/>
    <property type="chains" value="D4=1-459"/>
</dbReference>
<dbReference type="PDB" id="6QC7">
    <property type="method" value="EM"/>
    <property type="resolution" value="4.40 A"/>
    <property type="chains" value="D4=1-459"/>
</dbReference>
<dbReference type="PDB" id="6QC8">
    <property type="method" value="EM"/>
    <property type="resolution" value="4.20 A"/>
    <property type="chains" value="D4=1-459"/>
</dbReference>
<dbReference type="PDB" id="6QC9">
    <property type="method" value="EM"/>
    <property type="resolution" value="5.70 A"/>
    <property type="chains" value="D4=1-459"/>
</dbReference>
<dbReference type="PDB" id="6QCA">
    <property type="method" value="EM"/>
    <property type="resolution" value="6.20 A"/>
    <property type="chains" value="D4=1-459"/>
</dbReference>
<dbReference type="PDB" id="6QCF">
    <property type="method" value="EM"/>
    <property type="resolution" value="6.50 A"/>
    <property type="chains" value="D4=1-459"/>
</dbReference>
<dbReference type="PDB" id="6ZKA">
    <property type="method" value="EM"/>
    <property type="resolution" value="2.50 A"/>
    <property type="chains" value="M=1-459"/>
</dbReference>
<dbReference type="PDB" id="6ZKB">
    <property type="method" value="EM"/>
    <property type="resolution" value="2.90 A"/>
    <property type="chains" value="M=1-459"/>
</dbReference>
<dbReference type="PDB" id="6ZKC">
    <property type="method" value="EM"/>
    <property type="resolution" value="3.10 A"/>
    <property type="chains" value="M=1-459"/>
</dbReference>
<dbReference type="PDB" id="6ZKD">
    <property type="method" value="EM"/>
    <property type="resolution" value="2.70 A"/>
    <property type="chains" value="M=1-459"/>
</dbReference>
<dbReference type="PDB" id="6ZKE">
    <property type="method" value="EM"/>
    <property type="resolution" value="2.60 A"/>
    <property type="chains" value="M=1-459"/>
</dbReference>
<dbReference type="PDB" id="6ZKF">
    <property type="method" value="EM"/>
    <property type="resolution" value="2.80 A"/>
    <property type="chains" value="M=1-459"/>
</dbReference>
<dbReference type="PDB" id="6ZKG">
    <property type="method" value="EM"/>
    <property type="resolution" value="3.40 A"/>
    <property type="chains" value="M=1-459"/>
</dbReference>
<dbReference type="PDB" id="6ZKH">
    <property type="method" value="EM"/>
    <property type="resolution" value="3.00 A"/>
    <property type="chains" value="M=1-459"/>
</dbReference>
<dbReference type="PDB" id="6ZKI">
    <property type="method" value="EM"/>
    <property type="resolution" value="2.80 A"/>
    <property type="chains" value="M=1-459"/>
</dbReference>
<dbReference type="PDB" id="6ZKJ">
    <property type="method" value="EM"/>
    <property type="resolution" value="3.00 A"/>
    <property type="chains" value="M=1-459"/>
</dbReference>
<dbReference type="PDB" id="6ZKK">
    <property type="method" value="EM"/>
    <property type="resolution" value="3.70 A"/>
    <property type="chains" value="M=1-459"/>
</dbReference>
<dbReference type="PDB" id="6ZKL">
    <property type="method" value="EM"/>
    <property type="resolution" value="3.10 A"/>
    <property type="chains" value="M=1-459"/>
</dbReference>
<dbReference type="PDB" id="6ZKM">
    <property type="method" value="EM"/>
    <property type="resolution" value="2.80 A"/>
    <property type="chains" value="M=1-459"/>
</dbReference>
<dbReference type="PDB" id="6ZKN">
    <property type="method" value="EM"/>
    <property type="resolution" value="2.90 A"/>
    <property type="chains" value="M=1-459"/>
</dbReference>
<dbReference type="PDB" id="6ZKO">
    <property type="method" value="EM"/>
    <property type="resolution" value="3.80 A"/>
    <property type="chains" value="M=1-459"/>
</dbReference>
<dbReference type="PDB" id="6ZKP">
    <property type="method" value="EM"/>
    <property type="resolution" value="3.20 A"/>
    <property type="chains" value="M=1-459"/>
</dbReference>
<dbReference type="PDB" id="6ZKQ">
    <property type="method" value="EM"/>
    <property type="resolution" value="3.30 A"/>
    <property type="chains" value="M=1-459"/>
</dbReference>
<dbReference type="PDB" id="6ZKR">
    <property type="method" value="EM"/>
    <property type="resolution" value="3.50 A"/>
    <property type="chains" value="M=1-459"/>
</dbReference>
<dbReference type="PDB" id="6ZKS">
    <property type="method" value="EM"/>
    <property type="resolution" value="3.10 A"/>
    <property type="chains" value="M=1-459"/>
</dbReference>
<dbReference type="PDB" id="6ZKT">
    <property type="method" value="EM"/>
    <property type="resolution" value="2.80 A"/>
    <property type="chains" value="M=1-459"/>
</dbReference>
<dbReference type="PDB" id="6ZKU">
    <property type="method" value="EM"/>
    <property type="resolution" value="3.00 A"/>
    <property type="chains" value="M=1-459"/>
</dbReference>
<dbReference type="PDB" id="6ZKV">
    <property type="method" value="EM"/>
    <property type="resolution" value="2.90 A"/>
    <property type="chains" value="M=1-459"/>
</dbReference>
<dbReference type="PDB" id="7ZD6">
    <property type="method" value="EM"/>
    <property type="resolution" value="3.16 A"/>
    <property type="chains" value="M=1-459"/>
</dbReference>
<dbReference type="PDB" id="7ZDH">
    <property type="method" value="EM"/>
    <property type="resolution" value="3.46 A"/>
    <property type="chains" value="M=1-459"/>
</dbReference>
<dbReference type="PDB" id="7ZDJ">
    <property type="method" value="EM"/>
    <property type="resolution" value="3.25 A"/>
    <property type="chains" value="M=1-459"/>
</dbReference>
<dbReference type="PDB" id="7ZDM">
    <property type="method" value="EM"/>
    <property type="resolution" value="3.44 A"/>
    <property type="chains" value="M=1-459"/>
</dbReference>
<dbReference type="PDB" id="7ZDP">
    <property type="method" value="EM"/>
    <property type="resolution" value="3.88 A"/>
    <property type="chains" value="M=1-459"/>
</dbReference>
<dbReference type="PDB" id="7ZEB">
    <property type="method" value="EM"/>
    <property type="resolution" value="3.80 A"/>
    <property type="chains" value="M=1-459"/>
</dbReference>
<dbReference type="PDBsum" id="5LNK"/>
<dbReference type="PDBsum" id="6Q9B"/>
<dbReference type="PDBsum" id="6QA9"/>
<dbReference type="PDBsum" id="6QBX"/>
<dbReference type="PDBsum" id="6QC2"/>
<dbReference type="PDBsum" id="6QC3"/>
<dbReference type="PDBsum" id="6QC4"/>
<dbReference type="PDBsum" id="6QC5"/>
<dbReference type="PDBsum" id="6QC6"/>
<dbReference type="PDBsum" id="6QC7"/>
<dbReference type="PDBsum" id="6QC8"/>
<dbReference type="PDBsum" id="6QC9"/>
<dbReference type="PDBsum" id="6QCA"/>
<dbReference type="PDBsum" id="6QCF"/>
<dbReference type="PDBsum" id="6ZKA"/>
<dbReference type="PDBsum" id="6ZKB"/>
<dbReference type="PDBsum" id="6ZKC"/>
<dbReference type="PDBsum" id="6ZKD"/>
<dbReference type="PDBsum" id="6ZKE"/>
<dbReference type="PDBsum" id="6ZKF"/>
<dbReference type="PDBsum" id="6ZKG"/>
<dbReference type="PDBsum" id="6ZKH"/>
<dbReference type="PDBsum" id="6ZKI"/>
<dbReference type="PDBsum" id="6ZKJ"/>
<dbReference type="PDBsum" id="6ZKK"/>
<dbReference type="PDBsum" id="6ZKL"/>
<dbReference type="PDBsum" id="6ZKM"/>
<dbReference type="PDBsum" id="6ZKN"/>
<dbReference type="PDBsum" id="6ZKO"/>
<dbReference type="PDBsum" id="6ZKP"/>
<dbReference type="PDBsum" id="6ZKQ"/>
<dbReference type="PDBsum" id="6ZKR"/>
<dbReference type="PDBsum" id="6ZKS"/>
<dbReference type="PDBsum" id="6ZKT"/>
<dbReference type="PDBsum" id="6ZKU"/>
<dbReference type="PDBsum" id="6ZKV"/>
<dbReference type="PDBsum" id="7ZD6"/>
<dbReference type="PDBsum" id="7ZDH"/>
<dbReference type="PDBsum" id="7ZDJ"/>
<dbReference type="PDBsum" id="7ZDM"/>
<dbReference type="PDBsum" id="7ZDP"/>
<dbReference type="PDBsum" id="7ZEB"/>
<dbReference type="EMDB" id="EMD-11242"/>
<dbReference type="EMDB" id="EMD-11243"/>
<dbReference type="EMDB" id="EMD-11244"/>
<dbReference type="EMDB" id="EMD-11245"/>
<dbReference type="EMDB" id="EMD-11246"/>
<dbReference type="EMDB" id="EMD-11247"/>
<dbReference type="EMDB" id="EMD-11248"/>
<dbReference type="EMDB" id="EMD-11249"/>
<dbReference type="EMDB" id="EMD-11250"/>
<dbReference type="EMDB" id="EMD-11251"/>
<dbReference type="EMDB" id="EMD-11252"/>
<dbReference type="EMDB" id="EMD-11253"/>
<dbReference type="EMDB" id="EMD-11254"/>
<dbReference type="EMDB" id="EMD-11255"/>
<dbReference type="EMDB" id="EMD-11256"/>
<dbReference type="EMDB" id="EMD-11257"/>
<dbReference type="EMDB" id="EMD-11258"/>
<dbReference type="EMDB" id="EMD-11259"/>
<dbReference type="EMDB" id="EMD-11260"/>
<dbReference type="EMDB" id="EMD-11261"/>
<dbReference type="EMDB" id="EMD-11262"/>
<dbReference type="EMDB" id="EMD-11263"/>
<dbReference type="EMDB" id="EMD-14637"/>
<dbReference type="EMDB" id="EMD-14648"/>
<dbReference type="EMDB" id="EMD-14651"/>
<dbReference type="EMDB" id="EMD-14658"/>
<dbReference type="EMDB" id="EMD-14664"/>
<dbReference type="EMDB" id="EMD-14688"/>
<dbReference type="EMDB" id="EMD-4479"/>
<dbReference type="EMDB" id="EMD-4482"/>
<dbReference type="EMDB" id="EMD-4493"/>
<dbReference type="EMDB" id="EMD-4494"/>
<dbReference type="EMDB" id="EMD-4495"/>
<dbReference type="EMDB" id="EMD-4496"/>
<dbReference type="EMDB" id="EMD-4497"/>
<dbReference type="EMDB" id="EMD-4498"/>
<dbReference type="EMDB" id="EMD-4499"/>
<dbReference type="EMDB" id="EMD-4500"/>
<dbReference type="EMDB" id="EMD-4501"/>
<dbReference type="EMDB" id="EMD-4502"/>
<dbReference type="EMDB" id="EMD-4505"/>
<dbReference type="EMDB" id="EMD-8128"/>
<dbReference type="SMR" id="O78755"/>
<dbReference type="STRING" id="9940.ENSOARP00000000010"/>
<dbReference type="PaxDb" id="9940-ENSOARP00000000010"/>
<dbReference type="Ensembl" id="ENSOART00025000029">
    <property type="protein sequence ID" value="ENSOARP00025000011"/>
    <property type="gene ID" value="ENSOARG00025000029"/>
</dbReference>
<dbReference type="Ensembl" id="ENSOART00040000029">
    <property type="protein sequence ID" value="ENSOARP00040000011"/>
    <property type="gene ID" value="ENSOARG00040000029"/>
</dbReference>
<dbReference type="Ensembl" id="ENSOART00180000029">
    <property type="protein sequence ID" value="ENSOARP00180000011"/>
    <property type="gene ID" value="ENSOARG00180000029"/>
</dbReference>
<dbReference type="Ensembl" id="ENSOART00185000029">
    <property type="protein sequence ID" value="ENSOARP00185000011"/>
    <property type="gene ID" value="ENSOARG00185000029"/>
</dbReference>
<dbReference type="Ensembl" id="ENSOART00215000029">
    <property type="protein sequence ID" value="ENSOARP00215000011"/>
    <property type="gene ID" value="ENSOARG00215000029"/>
</dbReference>
<dbReference type="Ensembl" id="ENSOART00220000029">
    <property type="protein sequence ID" value="ENSOARP00220000011"/>
    <property type="gene ID" value="ENSOARG00220000029"/>
</dbReference>
<dbReference type="Ensembl" id="ENSOART00225000029">
    <property type="protein sequence ID" value="ENSOARP00225000011"/>
    <property type="gene ID" value="ENSOARG00225000029"/>
</dbReference>
<dbReference type="Ensembl" id="ENSOART00260000029">
    <property type="protein sequence ID" value="ENSOARP00260000011"/>
    <property type="gene ID" value="ENSOARG00260000029"/>
</dbReference>
<dbReference type="GeneID" id="808257"/>
<dbReference type="KEGG" id="oas:808257"/>
<dbReference type="CTD" id="4538"/>
<dbReference type="eggNOG" id="KOG4845">
    <property type="taxonomic scope" value="Eukaryota"/>
</dbReference>
<dbReference type="HOGENOM" id="CLU_007100_4_0_1"/>
<dbReference type="OMA" id="ITRWGNQ"/>
<dbReference type="OrthoDB" id="564260at2759"/>
<dbReference type="Proteomes" id="UP000002356">
    <property type="component" value="Mitochondrion"/>
</dbReference>
<dbReference type="Bgee" id="ENSOARG00000000028">
    <property type="expression patterns" value="Expressed in cardiac muscle tissue of left auricle and 55 other cell types or tissues"/>
</dbReference>
<dbReference type="ExpressionAtlas" id="O78755">
    <property type="expression patterns" value="baseline"/>
</dbReference>
<dbReference type="GO" id="GO:0005743">
    <property type="term" value="C:mitochondrial inner membrane"/>
    <property type="evidence" value="ECO:0000250"/>
    <property type="project" value="UniProtKB"/>
</dbReference>
<dbReference type="GO" id="GO:0045271">
    <property type="term" value="C:respiratory chain complex I"/>
    <property type="evidence" value="ECO:0007669"/>
    <property type="project" value="Ensembl"/>
</dbReference>
<dbReference type="GO" id="GO:0008137">
    <property type="term" value="F:NADH dehydrogenase (ubiquinone) activity"/>
    <property type="evidence" value="ECO:0000250"/>
    <property type="project" value="UniProtKB"/>
</dbReference>
<dbReference type="GO" id="GO:0048039">
    <property type="term" value="F:ubiquinone binding"/>
    <property type="evidence" value="ECO:0007669"/>
    <property type="project" value="TreeGrafter"/>
</dbReference>
<dbReference type="GO" id="GO:0015990">
    <property type="term" value="P:electron transport coupled proton transport"/>
    <property type="evidence" value="ECO:0007669"/>
    <property type="project" value="TreeGrafter"/>
</dbReference>
<dbReference type="GO" id="GO:0006120">
    <property type="term" value="P:mitochondrial electron transport, NADH to ubiquinone"/>
    <property type="evidence" value="ECO:0000250"/>
    <property type="project" value="UniProtKB"/>
</dbReference>
<dbReference type="GO" id="GO:0032981">
    <property type="term" value="P:mitochondrial respiratory chain complex I assembly"/>
    <property type="evidence" value="ECO:0000250"/>
    <property type="project" value="UniProtKB"/>
</dbReference>
<dbReference type="InterPro" id="IPR000260">
    <property type="entry name" value="NADH4_N"/>
</dbReference>
<dbReference type="InterPro" id="IPR010227">
    <property type="entry name" value="NADH_Q_OxRdtase_chainM/4"/>
</dbReference>
<dbReference type="InterPro" id="IPR003918">
    <property type="entry name" value="NADH_UbQ_OxRdtase"/>
</dbReference>
<dbReference type="InterPro" id="IPR001750">
    <property type="entry name" value="ND/Mrp_TM"/>
</dbReference>
<dbReference type="NCBIfam" id="TIGR01972">
    <property type="entry name" value="NDH_I_M"/>
    <property type="match status" value="1"/>
</dbReference>
<dbReference type="PANTHER" id="PTHR43507">
    <property type="entry name" value="NADH-UBIQUINONE OXIDOREDUCTASE CHAIN 4"/>
    <property type="match status" value="1"/>
</dbReference>
<dbReference type="PANTHER" id="PTHR43507:SF20">
    <property type="entry name" value="NADH-UBIQUINONE OXIDOREDUCTASE CHAIN 4"/>
    <property type="match status" value="1"/>
</dbReference>
<dbReference type="Pfam" id="PF01059">
    <property type="entry name" value="Oxidored_q5_N"/>
    <property type="match status" value="1"/>
</dbReference>
<dbReference type="Pfam" id="PF00361">
    <property type="entry name" value="Proton_antipo_M"/>
    <property type="match status" value="1"/>
</dbReference>
<dbReference type="PRINTS" id="PR01437">
    <property type="entry name" value="NUOXDRDTASE4"/>
</dbReference>
<comment type="function">
    <text evidence="1">Core subunit of the mitochondrial membrane respiratory chain NADH dehydrogenase (Complex I) which catalyzes electron transfer from NADH through the respiratory chain, using ubiquinone as an electron acceptor. Essential for the catalytic activity and assembly of complex I.</text>
</comment>
<comment type="catalytic activity">
    <reaction evidence="1">
        <text>a ubiquinone + NADH + 5 H(+)(in) = a ubiquinol + NAD(+) + 4 H(+)(out)</text>
        <dbReference type="Rhea" id="RHEA:29091"/>
        <dbReference type="Rhea" id="RHEA-COMP:9565"/>
        <dbReference type="Rhea" id="RHEA-COMP:9566"/>
        <dbReference type="ChEBI" id="CHEBI:15378"/>
        <dbReference type="ChEBI" id="CHEBI:16389"/>
        <dbReference type="ChEBI" id="CHEBI:17976"/>
        <dbReference type="ChEBI" id="CHEBI:57540"/>
        <dbReference type="ChEBI" id="CHEBI:57945"/>
        <dbReference type="EC" id="7.1.1.2"/>
    </reaction>
</comment>
<comment type="subunit">
    <text evidence="2">Core subunit of respiratory chain NADH dehydrogenase (Complex I) which is composed of 45 different subunits.</text>
</comment>
<comment type="subcellular location">
    <subcellularLocation>
        <location evidence="2">Mitochondrion inner membrane</location>
        <topology evidence="3">Multi-pass membrane protein</topology>
    </subcellularLocation>
</comment>
<comment type="similarity">
    <text evidence="4">Belongs to the complex I subunit 4 family.</text>
</comment>
<organism>
    <name type="scientific">Ovis aries</name>
    <name type="common">Sheep</name>
    <dbReference type="NCBI Taxonomy" id="9940"/>
    <lineage>
        <taxon>Eukaryota</taxon>
        <taxon>Metazoa</taxon>
        <taxon>Chordata</taxon>
        <taxon>Craniata</taxon>
        <taxon>Vertebrata</taxon>
        <taxon>Euteleostomi</taxon>
        <taxon>Mammalia</taxon>
        <taxon>Eutheria</taxon>
        <taxon>Laurasiatheria</taxon>
        <taxon>Artiodactyla</taxon>
        <taxon>Ruminantia</taxon>
        <taxon>Pecora</taxon>
        <taxon>Bovidae</taxon>
        <taxon>Caprinae</taxon>
        <taxon>Ovis</taxon>
    </lineage>
</organism>
<proteinExistence type="evidence at protein level"/>
<sequence>MLKYIIPTMMLMPLTWLSKNSMIWINTTLHSLLISLTSLLLLNQFGDNSLNFSLTFFSDSLSTPLLILTMWLLPLMLMASQHHLSKENLARKKLFISMLILLQLFLIMTFTATELIFFYIMFEATLVPTLIIITRWGNQTERLNAGLYFLFYTLAGSLPLLVALIYIQNTMGSLNFLILQYWVQPMPNSWSNTFMWLACMMAFMVKMPLYGLHLWLPKAHVEAPIAGSMVLAAILLKLGGYGMMRITLLLNPITDFMAYPFIMLSLWGMIMTSSICLRQTDLKSLIAYSSVSHMALVIVAILIQTPWSYMGATALMIAHGLTSSMLFCLANSNYERVHSRTMILARGLQTLLPLMAAWWLLASLTNLALPPSINLIGELFVVMSTFSWSNITIILMGLNMVITALYSLYMLITTQRGKHTHHINNILPSFTRENALMSLHMLPLLLLSLNPKIILGPLY</sequence>
<feature type="chain" id="PRO_0000117986" description="NADH-ubiquinone oxidoreductase chain 4">
    <location>
        <begin position="1"/>
        <end position="459"/>
    </location>
</feature>
<feature type="transmembrane region" description="Helical" evidence="3">
    <location>
        <begin position="22"/>
        <end position="42"/>
    </location>
</feature>
<feature type="transmembrane region" description="Helical" evidence="3">
    <location>
        <begin position="60"/>
        <end position="80"/>
    </location>
</feature>
<feature type="transmembrane region" description="Helical" evidence="3">
    <location>
        <begin position="98"/>
        <end position="118"/>
    </location>
</feature>
<feature type="transmembrane region" description="Helical" evidence="3">
    <location>
        <begin position="147"/>
        <end position="167"/>
    </location>
</feature>
<feature type="transmembrane region" description="Helical" evidence="3">
    <location>
        <begin position="196"/>
        <end position="216"/>
    </location>
</feature>
<feature type="transmembrane region" description="Helical" evidence="3">
    <location>
        <begin position="224"/>
        <end position="244"/>
    </location>
</feature>
<feature type="transmembrane region" description="Helical" evidence="3">
    <location>
        <begin position="256"/>
        <end position="276"/>
    </location>
</feature>
<feature type="transmembrane region" description="Helical" evidence="3">
    <location>
        <begin position="284"/>
        <end position="303"/>
    </location>
</feature>
<feature type="transmembrane region" description="Helical" evidence="3">
    <location>
        <begin position="308"/>
        <end position="330"/>
    </location>
</feature>
<feature type="transmembrane region" description="Helical" evidence="3">
    <location>
        <begin position="351"/>
        <end position="371"/>
    </location>
</feature>
<feature type="transmembrane region" description="Helical" evidence="3">
    <location>
        <begin position="391"/>
        <end position="411"/>
    </location>
</feature>
<feature type="helix" evidence="6">
    <location>
        <begin position="2"/>
        <end position="16"/>
    </location>
</feature>
<feature type="turn" evidence="8">
    <location>
        <begin position="20"/>
        <end position="22"/>
    </location>
</feature>
<feature type="helix" evidence="6">
    <location>
        <begin position="23"/>
        <end position="37"/>
    </location>
</feature>
<feature type="helix" evidence="6">
    <location>
        <begin position="38"/>
        <end position="42"/>
    </location>
</feature>
<feature type="strand" evidence="6">
    <location>
        <begin position="46"/>
        <end position="48"/>
    </location>
</feature>
<feature type="strand" evidence="6">
    <location>
        <begin position="53"/>
        <end position="58"/>
    </location>
</feature>
<feature type="helix" evidence="6">
    <location>
        <begin position="62"/>
        <end position="80"/>
    </location>
</feature>
<feature type="turn" evidence="6">
    <location>
        <begin position="81"/>
        <end position="86"/>
    </location>
</feature>
<feature type="helix" evidence="6">
    <location>
        <begin position="89"/>
        <end position="110"/>
    </location>
</feature>
<feature type="strand" evidence="6">
    <location>
        <begin position="112"/>
        <end position="114"/>
    </location>
</feature>
<feature type="helix" evidence="6">
    <location>
        <begin position="115"/>
        <end position="124"/>
    </location>
</feature>
<feature type="helix" evidence="6">
    <location>
        <begin position="126"/>
        <end position="136"/>
    </location>
</feature>
<feature type="strand" evidence="6">
    <location>
        <begin position="138"/>
        <end position="140"/>
    </location>
</feature>
<feature type="helix" evidence="6">
    <location>
        <begin position="142"/>
        <end position="171"/>
    </location>
</feature>
<feature type="helix" evidence="6">
    <location>
        <begin position="176"/>
        <end position="182"/>
    </location>
</feature>
<feature type="helix" evidence="6">
    <location>
        <begin position="190"/>
        <end position="206"/>
    </location>
</feature>
<feature type="turn" evidence="7">
    <location>
        <begin position="210"/>
        <end position="212"/>
    </location>
</feature>
<feature type="helix" evidence="6">
    <location>
        <begin position="213"/>
        <end position="215"/>
    </location>
</feature>
<feature type="helix" evidence="6">
    <location>
        <begin position="216"/>
        <end position="222"/>
    </location>
</feature>
<feature type="helix" evidence="6">
    <location>
        <begin position="225"/>
        <end position="233"/>
    </location>
</feature>
<feature type="helix" evidence="6">
    <location>
        <begin position="235"/>
        <end position="246"/>
    </location>
</feature>
<feature type="turn" evidence="6">
    <location>
        <begin position="247"/>
        <end position="251"/>
    </location>
</feature>
<feature type="helix" evidence="6">
    <location>
        <begin position="254"/>
        <end position="277"/>
    </location>
</feature>
<feature type="helix" evidence="6">
    <location>
        <begin position="282"/>
        <end position="303"/>
    </location>
</feature>
<feature type="helix" evidence="6">
    <location>
        <begin position="306"/>
        <end position="337"/>
    </location>
</feature>
<feature type="turn" evidence="6">
    <location>
        <begin position="342"/>
        <end position="344"/>
    </location>
</feature>
<feature type="helix" evidence="6">
    <location>
        <begin position="348"/>
        <end position="351"/>
    </location>
</feature>
<feature type="helix" evidence="6">
    <location>
        <begin position="353"/>
        <end position="366"/>
    </location>
</feature>
<feature type="helix" evidence="6">
    <location>
        <begin position="373"/>
        <end position="388"/>
    </location>
</feature>
<feature type="helix" evidence="6">
    <location>
        <begin position="392"/>
        <end position="415"/>
    </location>
</feature>
<feature type="strand" evidence="8">
    <location>
        <begin position="416"/>
        <end position="418"/>
    </location>
</feature>
<feature type="strand" evidence="8">
    <location>
        <begin position="421"/>
        <end position="423"/>
    </location>
</feature>
<feature type="helix" evidence="6">
    <location>
        <begin position="431"/>
        <end position="446"/>
    </location>
</feature>
<feature type="turn" evidence="6">
    <location>
        <begin position="447"/>
        <end position="449"/>
    </location>
</feature>
<feature type="helix" evidence="6">
    <location>
        <begin position="451"/>
        <end position="454"/>
    </location>
</feature>
<feature type="helix" evidence="9">
    <location>
        <begin position="456"/>
        <end position="458"/>
    </location>
</feature>
<accession>O78755</accession>
<geneLocation type="mitochondrion"/>
<evidence type="ECO:0000250" key="1">
    <source>
        <dbReference type="UniProtKB" id="P03905"/>
    </source>
</evidence>
<evidence type="ECO:0000250" key="2">
    <source>
        <dbReference type="UniProtKB" id="P03910"/>
    </source>
</evidence>
<evidence type="ECO:0000255" key="3"/>
<evidence type="ECO:0000305" key="4"/>
<evidence type="ECO:0000312" key="5">
    <source>
        <dbReference type="Proteomes" id="UP000002356"/>
    </source>
</evidence>
<evidence type="ECO:0007829" key="6">
    <source>
        <dbReference type="PDB" id="6ZKA"/>
    </source>
</evidence>
<evidence type="ECO:0007829" key="7">
    <source>
        <dbReference type="PDB" id="6ZKC"/>
    </source>
</evidence>
<evidence type="ECO:0007829" key="8">
    <source>
        <dbReference type="PDB" id="6ZKE"/>
    </source>
</evidence>
<evidence type="ECO:0007829" key="9">
    <source>
        <dbReference type="PDB" id="6ZKI"/>
    </source>
</evidence>
<keyword id="KW-0002">3D-structure</keyword>
<keyword id="KW-0249">Electron transport</keyword>
<keyword id="KW-0472">Membrane</keyword>
<keyword id="KW-0496">Mitochondrion</keyword>
<keyword id="KW-0999">Mitochondrion inner membrane</keyword>
<keyword id="KW-0520">NAD</keyword>
<keyword id="KW-1185">Reference proteome</keyword>
<keyword id="KW-0679">Respiratory chain</keyword>
<keyword id="KW-1278">Translocase</keyword>
<keyword id="KW-0812">Transmembrane</keyword>
<keyword id="KW-1133">Transmembrane helix</keyword>
<keyword id="KW-0813">Transport</keyword>
<keyword id="KW-0830">Ubiquinone</keyword>
<name>NU4M_SHEEP</name>
<gene>
    <name type="primary">MT-ND4</name>
    <name type="synonym">MTND4</name>
    <name type="synonym">NADH4</name>
    <name type="synonym">ND4</name>
</gene>
<reference key="1">
    <citation type="journal article" date="1998" name="J. Mol. Evol.">
        <title>The complete mitochondrial DNA sequence of the domestic sheep (Ovis aries) and comparison with the other major ovine haplotype.</title>
        <authorList>
            <person name="Hiendleder S."/>
            <person name="Lewalski H."/>
            <person name="Wassmuth R."/>
            <person name="Janke A."/>
        </authorList>
    </citation>
    <scope>NUCLEOTIDE SEQUENCE [LARGE SCALE GENOMIC DNA]</scope>
    <source>
        <strain evidence="5">Merinolandschaf</strain>
        <tissue>Liver</tissue>
    </source>
</reference>